<organism>
    <name type="scientific">Saccharolobus islandicus (strain Y.N.15.51 / Yellowstone #2)</name>
    <name type="common">Sulfolobus islandicus</name>
    <dbReference type="NCBI Taxonomy" id="419942"/>
    <lineage>
        <taxon>Archaea</taxon>
        <taxon>Thermoproteota</taxon>
        <taxon>Thermoprotei</taxon>
        <taxon>Sulfolobales</taxon>
        <taxon>Sulfolobaceae</taxon>
        <taxon>Saccharolobus</taxon>
    </lineage>
</organism>
<name>SYTC_SACI1</name>
<protein>
    <recommendedName>
        <fullName>Threonine--tRNA ligase catalytic subunit</fullName>
        <ecNumber evidence="3">6.1.1.3</ecNumber>
    </recommendedName>
    <alternativeName>
        <fullName>Threonyl-tRNA synthetase catalytic subunit</fullName>
        <shortName>ThrRS-cat</shortName>
    </alternativeName>
</protein>
<comment type="function">
    <text evidence="1">Catalyzes the attachment of threonine to tRNA(Thr) in a two-step reaction: L-threonine is first activated by ATP to form Thr-AMP and then transferred to the acceptor end of tRNA(Thr). Also activates L-serine and transfers it to tRNA(Thr) but cannot deacylate incorrectly charged amino acid; unlike most archaea the editing function is found in a freestanding protein.</text>
</comment>
<comment type="catalytic activity">
    <reaction evidence="3">
        <text>tRNA(Thr) + L-threonine + ATP = L-threonyl-tRNA(Thr) + AMP + diphosphate + H(+)</text>
        <dbReference type="Rhea" id="RHEA:24624"/>
        <dbReference type="Rhea" id="RHEA-COMP:9670"/>
        <dbReference type="Rhea" id="RHEA-COMP:9704"/>
        <dbReference type="ChEBI" id="CHEBI:15378"/>
        <dbReference type="ChEBI" id="CHEBI:30616"/>
        <dbReference type="ChEBI" id="CHEBI:33019"/>
        <dbReference type="ChEBI" id="CHEBI:57926"/>
        <dbReference type="ChEBI" id="CHEBI:78442"/>
        <dbReference type="ChEBI" id="CHEBI:78534"/>
        <dbReference type="ChEBI" id="CHEBI:456215"/>
        <dbReference type="EC" id="6.1.1.3"/>
    </reaction>
</comment>
<comment type="cofactor">
    <cofactor evidence="3">
        <name>Zn(2+)</name>
        <dbReference type="ChEBI" id="CHEBI:29105"/>
    </cofactor>
    <text evidence="3">Binds 1 zinc ion per subunit.</text>
</comment>
<comment type="subunit">
    <text evidence="1 2">Homodimer (By similarity). Probably interacts with its editing subunit (By similarity).</text>
</comment>
<comment type="subcellular location">
    <subcellularLocation>
        <location evidence="3">Cytoplasm</location>
    </subcellularLocation>
</comment>
<comment type="similarity">
    <text evidence="3">Belongs to the class-II aminoacyl-tRNA synthetase family.</text>
</comment>
<feature type="chain" id="PRO_1000203924" description="Threonine--tRNA ligase catalytic subunit">
    <location>
        <begin position="1"/>
        <end position="545"/>
    </location>
</feature>
<feature type="region of interest" description="Catalytic" evidence="3">
    <location>
        <begin position="139"/>
        <end position="433"/>
    </location>
</feature>
<feature type="binding site" evidence="3">
    <location>
        <position position="231"/>
    </location>
    <ligand>
        <name>Zn(2+)</name>
        <dbReference type="ChEBI" id="CHEBI:29105"/>
    </ligand>
</feature>
<feature type="binding site" evidence="3">
    <location>
        <position position="282"/>
    </location>
    <ligand>
        <name>Zn(2+)</name>
        <dbReference type="ChEBI" id="CHEBI:29105"/>
    </ligand>
</feature>
<feature type="binding site" evidence="3">
    <location>
        <position position="410"/>
    </location>
    <ligand>
        <name>Zn(2+)</name>
        <dbReference type="ChEBI" id="CHEBI:29105"/>
    </ligand>
</feature>
<dbReference type="EC" id="6.1.1.3" evidence="3"/>
<dbReference type="EMBL" id="CP001404">
    <property type="protein sequence ID" value="ACP49788.1"/>
    <property type="molecule type" value="Genomic_DNA"/>
</dbReference>
<dbReference type="RefSeq" id="WP_010923890.1">
    <property type="nucleotide sequence ID" value="NC_012623.1"/>
</dbReference>
<dbReference type="SMR" id="C3NMY1"/>
<dbReference type="GeneID" id="7808880"/>
<dbReference type="KEGG" id="sin:YN1551_2887"/>
<dbReference type="HOGENOM" id="CLU_008554_0_1_2"/>
<dbReference type="Proteomes" id="UP000006818">
    <property type="component" value="Chromosome"/>
</dbReference>
<dbReference type="GO" id="GO:0005737">
    <property type="term" value="C:cytoplasm"/>
    <property type="evidence" value="ECO:0007669"/>
    <property type="project" value="UniProtKB-SubCell"/>
</dbReference>
<dbReference type="GO" id="GO:0005524">
    <property type="term" value="F:ATP binding"/>
    <property type="evidence" value="ECO:0007669"/>
    <property type="project" value="UniProtKB-UniRule"/>
</dbReference>
<dbReference type="GO" id="GO:0046872">
    <property type="term" value="F:metal ion binding"/>
    <property type="evidence" value="ECO:0007669"/>
    <property type="project" value="UniProtKB-KW"/>
</dbReference>
<dbReference type="GO" id="GO:0004829">
    <property type="term" value="F:threonine-tRNA ligase activity"/>
    <property type="evidence" value="ECO:0007669"/>
    <property type="project" value="UniProtKB-UniRule"/>
</dbReference>
<dbReference type="GO" id="GO:0000049">
    <property type="term" value="F:tRNA binding"/>
    <property type="evidence" value="ECO:0007669"/>
    <property type="project" value="UniProtKB-KW"/>
</dbReference>
<dbReference type="GO" id="GO:0006435">
    <property type="term" value="P:threonyl-tRNA aminoacylation"/>
    <property type="evidence" value="ECO:0007669"/>
    <property type="project" value="UniProtKB-UniRule"/>
</dbReference>
<dbReference type="CDD" id="cd00860">
    <property type="entry name" value="ThrRS_anticodon"/>
    <property type="match status" value="1"/>
</dbReference>
<dbReference type="CDD" id="cd00771">
    <property type="entry name" value="ThrRS_core"/>
    <property type="match status" value="1"/>
</dbReference>
<dbReference type="FunFam" id="3.30.930.10:FF:000002">
    <property type="entry name" value="Threonine--tRNA ligase"/>
    <property type="match status" value="1"/>
</dbReference>
<dbReference type="FunFam" id="3.40.50.800:FF:000001">
    <property type="entry name" value="Threonine--tRNA ligase"/>
    <property type="match status" value="1"/>
</dbReference>
<dbReference type="Gene3D" id="3.40.50.800">
    <property type="entry name" value="Anticodon-binding domain"/>
    <property type="match status" value="1"/>
</dbReference>
<dbReference type="Gene3D" id="3.30.930.10">
    <property type="entry name" value="Bira Bifunctional Protein, Domain 2"/>
    <property type="match status" value="1"/>
</dbReference>
<dbReference type="HAMAP" id="MF_00184">
    <property type="entry name" value="Thr_tRNA_synth"/>
    <property type="match status" value="1"/>
</dbReference>
<dbReference type="InterPro" id="IPR002314">
    <property type="entry name" value="aa-tRNA-synt_IIb"/>
</dbReference>
<dbReference type="InterPro" id="IPR006195">
    <property type="entry name" value="aa-tRNA-synth_II"/>
</dbReference>
<dbReference type="InterPro" id="IPR045864">
    <property type="entry name" value="aa-tRNA-synth_II/BPL/LPL"/>
</dbReference>
<dbReference type="InterPro" id="IPR004154">
    <property type="entry name" value="Anticodon-bd"/>
</dbReference>
<dbReference type="InterPro" id="IPR036621">
    <property type="entry name" value="Anticodon-bd_dom_sf"/>
</dbReference>
<dbReference type="InterPro" id="IPR002320">
    <property type="entry name" value="Thr-tRNA-ligase_IIa"/>
</dbReference>
<dbReference type="InterPro" id="IPR018163">
    <property type="entry name" value="Thr/Ala-tRNA-synth_IIc_edit"/>
</dbReference>
<dbReference type="InterPro" id="IPR047246">
    <property type="entry name" value="ThrRS_anticodon"/>
</dbReference>
<dbReference type="InterPro" id="IPR033728">
    <property type="entry name" value="ThrRS_core"/>
</dbReference>
<dbReference type="NCBIfam" id="TIGR00418">
    <property type="entry name" value="thrS"/>
    <property type="match status" value="1"/>
</dbReference>
<dbReference type="PANTHER" id="PTHR11451:SF44">
    <property type="entry name" value="THREONINE--TRNA LIGASE, CHLOROPLASTIC_MITOCHONDRIAL 2"/>
    <property type="match status" value="1"/>
</dbReference>
<dbReference type="PANTHER" id="PTHR11451">
    <property type="entry name" value="THREONINE-TRNA LIGASE"/>
    <property type="match status" value="1"/>
</dbReference>
<dbReference type="Pfam" id="PF03129">
    <property type="entry name" value="HGTP_anticodon"/>
    <property type="match status" value="1"/>
</dbReference>
<dbReference type="Pfam" id="PF00587">
    <property type="entry name" value="tRNA-synt_2b"/>
    <property type="match status" value="1"/>
</dbReference>
<dbReference type="PRINTS" id="PR01047">
    <property type="entry name" value="TRNASYNTHTHR"/>
</dbReference>
<dbReference type="SUPFAM" id="SSF52954">
    <property type="entry name" value="Class II aaRS ABD-related"/>
    <property type="match status" value="1"/>
</dbReference>
<dbReference type="SUPFAM" id="SSF55681">
    <property type="entry name" value="Class II aaRS and biotin synthetases"/>
    <property type="match status" value="1"/>
</dbReference>
<dbReference type="SUPFAM" id="SSF55186">
    <property type="entry name" value="ThrRS/AlaRS common domain"/>
    <property type="match status" value="1"/>
</dbReference>
<dbReference type="PROSITE" id="PS50862">
    <property type="entry name" value="AA_TRNA_LIGASE_II"/>
    <property type="match status" value="1"/>
</dbReference>
<gene>
    <name evidence="4" type="primary">thrS-cat</name>
    <name evidence="3" type="synonym">thrS</name>
    <name type="ordered locus">YN1551_2887</name>
</gene>
<proteinExistence type="inferred from homology"/>
<keyword id="KW-0030">Aminoacyl-tRNA synthetase</keyword>
<keyword id="KW-0067">ATP-binding</keyword>
<keyword id="KW-0963">Cytoplasm</keyword>
<keyword id="KW-0436">Ligase</keyword>
<keyword id="KW-0479">Metal-binding</keyword>
<keyword id="KW-0547">Nucleotide-binding</keyword>
<keyword id="KW-0648">Protein biosynthesis</keyword>
<keyword id="KW-0694">RNA-binding</keyword>
<keyword id="KW-0820">tRNA-binding</keyword>
<keyword id="KW-0862">Zinc</keyword>
<sequence length="545" mass="63231">MESYKPVWLKGAVILAINLIDKGYKPVAVGLGERDFYIDVKSDTSITLDEVKKAINENVLANVSIENNQIVYKGNKVSIIEDKVSISTNLNPKYFEILNISTHHPNPNEQYVRIRGVAFETEEQLKDYLSWLEKAEETDHRLIGEKLDLFSFHEEAGSGLVLFHPKGQTIRNELIAFMREINDSMGYQEVYTSHVFKTDIWKISGHYTLYRDKLIVFNMEGDEYGVKPMNCPAHILIYKSKPRTYRDLPIRFSEFGHVYRWEKKGELYGLLRVRGFVQDDGHIFLREDQLREEIKMLISKTVEVWHKFGFKDDDIKPYLSTRPDESIGSDELWEKATNALISALQESGLKFGIKEKEGAFYGPKIDFEIRDSLGRWWQLSTIQVDFNLPERFKLEYIDKDGIKKRPVMVHRAIYGSIDRFVAILLEHFKGKLPTWLSSVQVRVLPITDEVNEYAEKVLNDMRKRRIRAEIDYAGETLSKRIKNAYDQGVPYILIVGKKEASEGTVTVRARGNIEVRNVKFEKFLELLITEIAQRDVEQTTVKALK</sequence>
<reference key="1">
    <citation type="journal article" date="2009" name="Proc. Natl. Acad. Sci. U.S.A.">
        <title>Biogeography of the Sulfolobus islandicus pan-genome.</title>
        <authorList>
            <person name="Reno M.L."/>
            <person name="Held N.L."/>
            <person name="Fields C.J."/>
            <person name="Burke P.V."/>
            <person name="Whitaker R.J."/>
        </authorList>
    </citation>
    <scope>NUCLEOTIDE SEQUENCE [LARGE SCALE GENOMIC DNA]</scope>
    <source>
        <strain>Y.N.15.51 / Yellowstone #2</strain>
    </source>
</reference>
<accession>C3NMY1</accession>
<evidence type="ECO:0000250" key="1">
    <source>
        <dbReference type="UniProtKB" id="Q97VW8"/>
    </source>
</evidence>
<evidence type="ECO:0000250" key="2">
    <source>
        <dbReference type="UniProtKB" id="Q9YDW0"/>
    </source>
</evidence>
<evidence type="ECO:0000255" key="3">
    <source>
        <dbReference type="HAMAP-Rule" id="MF_00184"/>
    </source>
</evidence>
<evidence type="ECO:0000305" key="4"/>